<protein>
    <recommendedName>
        <fullName evidence="1">Protein TIC 214</fullName>
    </recommendedName>
    <alternativeName>
        <fullName evidence="1">Translocon at the inner envelope membrane of chloroplasts 214</fullName>
        <shortName evidence="1">AtTIC214</shortName>
    </alternativeName>
</protein>
<reference key="1">
    <citation type="journal article" date="2005" name="BMC Biol.">
        <title>The complete chloroplast DNA sequences of the charophycean green algae Staurastrum and Zygnema reveal that the chloroplast genome underwent extensive changes during the evolution of the Zygnematales.</title>
        <authorList>
            <person name="Turmel M."/>
            <person name="Otis C."/>
            <person name="Lemieux C."/>
        </authorList>
    </citation>
    <scope>NUCLEOTIDE SEQUENCE [LARGE SCALE GENOMIC DNA]</scope>
</reference>
<dbReference type="EMBL" id="AY958086">
    <property type="protein sequence ID" value="AAX45877.1"/>
    <property type="molecule type" value="Genomic_DNA"/>
</dbReference>
<dbReference type="RefSeq" id="YP_636521.1">
    <property type="nucleotide sequence ID" value="NC_008117.1"/>
</dbReference>
<dbReference type="GeneID" id="4108197"/>
<dbReference type="GO" id="GO:0009706">
    <property type="term" value="C:chloroplast inner membrane"/>
    <property type="evidence" value="ECO:0007669"/>
    <property type="project" value="UniProtKB-SubCell"/>
</dbReference>
<dbReference type="GO" id="GO:0015031">
    <property type="term" value="P:protein transport"/>
    <property type="evidence" value="ECO:0007669"/>
    <property type="project" value="UniProtKB-KW"/>
</dbReference>
<dbReference type="InterPro" id="IPR008896">
    <property type="entry name" value="TIC214"/>
</dbReference>
<dbReference type="PANTHER" id="PTHR33163:SF40">
    <property type="entry name" value="PROTEIN TIC 214"/>
    <property type="match status" value="1"/>
</dbReference>
<dbReference type="PANTHER" id="PTHR33163">
    <property type="entry name" value="PROTEIN TIC 214-RELATED"/>
    <property type="match status" value="1"/>
</dbReference>
<dbReference type="Pfam" id="PF05758">
    <property type="entry name" value="Ycf1"/>
    <property type="match status" value="3"/>
</dbReference>
<keyword id="KW-0150">Chloroplast</keyword>
<keyword id="KW-0472">Membrane</keyword>
<keyword id="KW-0934">Plastid</keyword>
<keyword id="KW-1001">Plastid inner membrane</keyword>
<keyword id="KW-0653">Protein transport</keyword>
<keyword id="KW-0812">Transmembrane</keyword>
<keyword id="KW-1133">Transmembrane helix</keyword>
<keyword id="KW-0813">Transport</keyword>
<organism>
    <name type="scientific">Zygnema circumcarinatum</name>
    <name type="common">Green alga</name>
    <dbReference type="NCBI Taxonomy" id="35869"/>
    <lineage>
        <taxon>Eukaryota</taxon>
        <taxon>Viridiplantae</taxon>
        <taxon>Streptophyta</taxon>
        <taxon>Zygnematophyceae</taxon>
        <taxon>Zygnematophycidae</taxon>
        <taxon>Zygnematales</taxon>
        <taxon>Zygnemataceae</taxon>
        <taxon>Zygnema</taxon>
    </lineage>
</organism>
<sequence length="1676" mass="195440">MITIAPMLFSVLRAYDLACINTAGPLIILGIYYGFLITLPIAPSQLVCIRAFLLEGEGKESESPGTVAKSGILIAAISGLTVSQLAFFLSIYWPPLYMIWLKPHLLTLLVLPYMFFYWSRIQEFESSGWLKTEQSKIYDPRVRAAFLDSFLFQALNPVLLPSPVMTRLMSVFLFRYSQVSLFILGTAIGWLGGQIMFVLLSWCLLLRLERDLPTIYVIVRRLVHNIFPPIVFGLCLAYMGRAPVSFFRKQTDIQQMPEIRPTELWPSVAFDTTLWKRPFRLPKKDMLDNFPPLYNNKKRFSQYLFEVCVSEGKRRLSYTYPQSLLAFQSHLEDCLDVTYVSQQTDNDIYHEWATSKQNRKDQISNILLKQMEALDNGAPIETVIENKIASLTTIEQPVRKRLDPRLAKYMRYNTLSNKTESPWIQGESSVLEDTSLELQSKPNLFHLTENNYLREWISIKSEQMINTLILPWQSLEHDSDAALLTLLNNSPETNINKEQLYTWESLLHAYKLNPKVDIYKTMPGHKKLLYYLTKQPVTKLLTQIFHMDQRVDSSDIKTLLDYYKPLPVWYAQRHFTTTDIRQPRISKRLKSFDFVRRLITGSLRARRRNTLIWNALQIKPETPFLLRVHNVSKQEDMSIKQAISVTTQQTNLYASETAKRFNFRLAHMVRSPALVIQSWFRKYVKQPILILFKNVGRLLLLQKTEWSEDIGDWAREVYIYYSYDGKQYSITERPKKWYYTGLQIRILFPFHLRPWHPSNATADGKDKINLQLQSDFDLVNNNNSILEHSSYLTVWGSETEVAFGNVKKKPSFWKPTFKAIRLVLSRKLNKQFVKIGNMFQPVYKLVQTPLSSKFVNQTMFAQEEPSVSDNMKHNTIEQPINSIDNKNLFFLNHNKDNKATKNVLSIEKSSLILSDNRASQDSLVLSSDSNKLYTNEHKLENTSKQLLVIKSEHTKPLQQPIMLFRIKPILEANTIIKHSLIGRPPMQTNQKSVDNFQVQLLSKESSISIRYKLTQFNSLLVQFQRTWIYIKQNIQNIIVELFKFIQLQFTETRMTILHLIQQLMQLVSSQVITGFRTISSGIDHLFDSYYIWRMKHFTAKHLQNVYETTPIDSSSITQAYILNKIWQSIIESTPNLSWVTQQWTSENRLQDYLQTQLVDQGILNCQEPNKLTQANWNKWLEFFPQYIPSSNIWLNVIPNRYRSEVNLYWKYCDNIDYKNKHPIVSINAHNKIQQSNGLRYHTPLLQKLEKLSKRWKMYNLYRRYTSFVNNINTNRFPTEPILSNELNQLNYVNENIVHNSVNKTEETISYREPIEWGFTRTRLGRFSPYLTLSQSHSNNSIDDIDTEDIETLGLFAILQTYKEFNKKTNFTSSSVDHKLHKQESSAAPKIDHKLDSQLVSTNLIQRTCFEPMYASKLKSKLLKERFKNLLNAARLSILATKSGVTTDTTTFLSSNMQRDLSILTEDLNTHKDINEGIEISEETKQDAYSKAMRNSVLFKQNLQNWRLKIMDDQIFMYNMVSPILRLSNREHNDYILNLCNCLLGELSSNLVESIVALTPEDILLPTSSRELRVLDCLDLTAGPNDYQSVSNNTLIQNKTNSIAVTDQILQNKSKLSYSNFVSNIQQKSKPSYIIKRFLWPTYRLEDLACMNRFWLSSGNQSRFSALRISMYPSMLE</sequence>
<proteinExistence type="inferred from homology"/>
<accession>Q32RK5</accession>
<name>TI214_ZYGCR</name>
<feature type="chain" id="PRO_0000262636" description="Protein TIC 214">
    <location>
        <begin position="1"/>
        <end position="1676"/>
    </location>
</feature>
<feature type="transmembrane region" description="Helical" evidence="2">
    <location>
        <begin position="23"/>
        <end position="43"/>
    </location>
</feature>
<feature type="transmembrane region" description="Helical" evidence="2">
    <location>
        <begin position="71"/>
        <end position="91"/>
    </location>
</feature>
<feature type="transmembrane region" description="Helical" evidence="2">
    <location>
        <begin position="96"/>
        <end position="116"/>
    </location>
</feature>
<feature type="transmembrane region" description="Helical" evidence="2">
    <location>
        <begin position="145"/>
        <end position="165"/>
    </location>
</feature>
<feature type="transmembrane region" description="Helical" evidence="2">
    <location>
        <begin position="179"/>
        <end position="199"/>
    </location>
</feature>
<feature type="transmembrane region" description="Helical" evidence="2">
    <location>
        <begin position="226"/>
        <end position="246"/>
    </location>
</feature>
<comment type="function">
    <text evidence="1">Involved in protein precursor import into chloroplasts. May be part of an intermediate translocation complex acting as a protein-conducting channel at the inner envelope.</text>
</comment>
<comment type="subunit">
    <text evidence="1">Part of the Tic complex.</text>
</comment>
<comment type="subcellular location">
    <subcellularLocation>
        <location evidence="1">Plastid</location>
        <location evidence="1">Chloroplast inner membrane</location>
        <topology evidence="2">Multi-pass membrane protein</topology>
    </subcellularLocation>
</comment>
<comment type="similarity">
    <text evidence="3">Belongs to the TIC214 family.</text>
</comment>
<gene>
    <name evidence="1" type="primary">TIC214</name>
    <name type="synonym">ycf1</name>
</gene>
<evidence type="ECO:0000250" key="1">
    <source>
        <dbReference type="UniProtKB" id="P56785"/>
    </source>
</evidence>
<evidence type="ECO:0000255" key="2"/>
<evidence type="ECO:0000305" key="3"/>
<geneLocation type="chloroplast"/>